<proteinExistence type="evidence at protein level"/>
<comment type="interaction">
    <interactant intactId="EBI-25914">
        <id>P40364</id>
    </interactant>
    <interactant intactId="EBI-11297">
        <id>P23500</id>
        <label>MRS4</label>
    </interactant>
    <organismsDiffer>false</organismsDiffer>
    <experiments>2</experiments>
</comment>
<comment type="interaction">
    <interactant intactId="EBI-25914">
        <id>P40364</id>
    </interactant>
    <interactant intactId="EBI-22551">
        <id>P40035</id>
        <label>PIC2</label>
    </interactant>
    <organismsDiffer>false</organismsDiffer>
    <experiments>2</experiments>
</comment>
<comment type="subcellular location">
    <subcellularLocation>
        <location evidence="2 3 5 6">Mitochondrion membrane</location>
        <topology evidence="2 3 5 6">Peripheral membrane protein</topology>
        <orientation evidence="2 3 5 6">Intermembrane side</orientation>
    </subcellularLocation>
</comment>
<comment type="miscellaneous">
    <text evidence="4">Present with 3390 molecules/cell in log phase SD medium.</text>
</comment>
<accession>P40364</accession>
<accession>D6VWB6</accession>
<name>MPM1_YEAST</name>
<sequence>MGFYEGDDNDANTKAFNDKYIKDQKFATAPFWNLFPKLRDIDEYDNPLLPLPFNFNFRDLGDSALAMASGIPTVKQFDKCEELKGQSAWTTQGIWKCLVPSKAIPPLPQLDFLLPLEEIKSDKSHSHGLFFNDFNLFLKWRSHMNRLQKQRIKTRSTAVEPLARTPEDLMLNWDDLHLGNDAEYASADGSKKIVGRAQSISTTKDSNDAKPSTVKTEKIYFDDGTVDITTTTTSKGSSPQVKHKVVSVDEDN</sequence>
<feature type="chain" id="PRO_0000203056" description="Mitochondrial peculiar membrane protein 1">
    <location>
        <begin position="1"/>
        <end position="252"/>
    </location>
</feature>
<feature type="region of interest" description="Disordered" evidence="1">
    <location>
        <begin position="230"/>
        <end position="252"/>
    </location>
</feature>
<evidence type="ECO:0000256" key="1">
    <source>
        <dbReference type="SAM" id="MobiDB-lite"/>
    </source>
</evidence>
<evidence type="ECO:0000269" key="2">
    <source>
    </source>
</evidence>
<evidence type="ECO:0000269" key="3">
    <source>
    </source>
</evidence>
<evidence type="ECO:0000269" key="4">
    <source>
    </source>
</evidence>
<evidence type="ECO:0000269" key="5">
    <source>
    </source>
</evidence>
<evidence type="ECO:0000269" key="6">
    <source>
    </source>
</evidence>
<dbReference type="EMBL" id="Z34288">
    <property type="protein sequence ID" value="CAA84057.1"/>
    <property type="molecule type" value="Genomic_DNA"/>
</dbReference>
<dbReference type="EMBL" id="Z49342">
    <property type="protein sequence ID" value="CAA89358.1"/>
    <property type="molecule type" value="Genomic_DNA"/>
</dbReference>
<dbReference type="EMBL" id="BK006943">
    <property type="protein sequence ID" value="DAA08732.1"/>
    <property type="molecule type" value="Genomic_DNA"/>
</dbReference>
<dbReference type="PIR" id="S50806">
    <property type="entry name" value="S50806"/>
</dbReference>
<dbReference type="RefSeq" id="NP_012469.3">
    <property type="nucleotide sequence ID" value="NM_001181499.3"/>
</dbReference>
<dbReference type="SMR" id="P40364"/>
<dbReference type="BioGRID" id="33688">
    <property type="interactions" value="106"/>
</dbReference>
<dbReference type="DIP" id="DIP-3859N"/>
<dbReference type="FunCoup" id="P40364">
    <property type="interactions" value="587"/>
</dbReference>
<dbReference type="IntAct" id="P40364">
    <property type="interactions" value="65"/>
</dbReference>
<dbReference type="MINT" id="P40364"/>
<dbReference type="STRING" id="4932.YJL066C"/>
<dbReference type="iPTMnet" id="P40364"/>
<dbReference type="PaxDb" id="4932-YJL066C"/>
<dbReference type="PeptideAtlas" id="P40364"/>
<dbReference type="EnsemblFungi" id="YJL066C_mRNA">
    <property type="protein sequence ID" value="YJL066C"/>
    <property type="gene ID" value="YJL066C"/>
</dbReference>
<dbReference type="GeneID" id="853379"/>
<dbReference type="KEGG" id="sce:YJL066C"/>
<dbReference type="AGR" id="SGD:S000003602"/>
<dbReference type="SGD" id="S000003602">
    <property type="gene designation" value="MPM1"/>
</dbReference>
<dbReference type="VEuPathDB" id="FungiDB:YJL066C"/>
<dbReference type="eggNOG" id="ENOG502RZT3">
    <property type="taxonomic scope" value="Eukaryota"/>
</dbReference>
<dbReference type="HOGENOM" id="CLU_1111888_0_0_1"/>
<dbReference type="InParanoid" id="P40364"/>
<dbReference type="OMA" id="XTAVEPL"/>
<dbReference type="OrthoDB" id="4044171at2759"/>
<dbReference type="BioCyc" id="YEAST:G3O-31527-MONOMER"/>
<dbReference type="BioGRID-ORCS" id="853379">
    <property type="hits" value="2 hits in 10 CRISPR screens"/>
</dbReference>
<dbReference type="PRO" id="PR:P40364"/>
<dbReference type="Proteomes" id="UP000002311">
    <property type="component" value="Chromosome X"/>
</dbReference>
<dbReference type="RNAct" id="P40364">
    <property type="molecule type" value="protein"/>
</dbReference>
<dbReference type="GO" id="GO:0005758">
    <property type="term" value="C:mitochondrial intermembrane space"/>
    <property type="evidence" value="ECO:0000314"/>
    <property type="project" value="SGD"/>
</dbReference>
<dbReference type="GO" id="GO:0031966">
    <property type="term" value="C:mitochondrial membrane"/>
    <property type="evidence" value="ECO:0007669"/>
    <property type="project" value="UniProtKB-SubCell"/>
</dbReference>
<dbReference type="GO" id="GO:0005739">
    <property type="term" value="C:mitochondrion"/>
    <property type="evidence" value="ECO:0000314"/>
    <property type="project" value="SGD"/>
</dbReference>
<dbReference type="InterPro" id="IPR035187">
    <property type="entry name" value="Mpm1"/>
</dbReference>
<dbReference type="Pfam" id="PF17234">
    <property type="entry name" value="MPM1"/>
    <property type="match status" value="1"/>
</dbReference>
<organism>
    <name type="scientific">Saccharomyces cerevisiae (strain ATCC 204508 / S288c)</name>
    <name type="common">Baker's yeast</name>
    <dbReference type="NCBI Taxonomy" id="559292"/>
    <lineage>
        <taxon>Eukaryota</taxon>
        <taxon>Fungi</taxon>
        <taxon>Dikarya</taxon>
        <taxon>Ascomycota</taxon>
        <taxon>Saccharomycotina</taxon>
        <taxon>Saccharomycetes</taxon>
        <taxon>Saccharomycetales</taxon>
        <taxon>Saccharomycetaceae</taxon>
        <taxon>Saccharomyces</taxon>
    </lineage>
</organism>
<protein>
    <recommendedName>
        <fullName>Mitochondrial peculiar membrane protein 1</fullName>
    </recommendedName>
</protein>
<keyword id="KW-0472">Membrane</keyword>
<keyword id="KW-0496">Mitochondrion</keyword>
<keyword id="KW-1185">Reference proteome</keyword>
<reference key="1">
    <citation type="journal article" date="1995" name="Yeast">
        <title>Sequence of a 17.1 kb DNA fragment from chromosome X of Saccharomyces cerevisiae includes the mitochondrial ribosomal protein L8.</title>
        <authorList>
            <person name="Vandenbol M."/>
            <person name="Durand P."/>
            <person name="Dion C."/>
            <person name="Portetelle D."/>
            <person name="Hilger F."/>
        </authorList>
    </citation>
    <scope>NUCLEOTIDE SEQUENCE [GENOMIC DNA]</scope>
    <source>
        <strain>ATCC 204508 / S288c</strain>
    </source>
</reference>
<reference key="2">
    <citation type="journal article" date="1996" name="EMBO J.">
        <title>Complete nucleotide sequence of Saccharomyces cerevisiae chromosome X.</title>
        <authorList>
            <person name="Galibert F."/>
            <person name="Alexandraki D."/>
            <person name="Baur A."/>
            <person name="Boles E."/>
            <person name="Chalwatzis N."/>
            <person name="Chuat J.-C."/>
            <person name="Coster F."/>
            <person name="Cziepluch C."/>
            <person name="de Haan M."/>
            <person name="Domdey H."/>
            <person name="Durand P."/>
            <person name="Entian K.-D."/>
            <person name="Gatius M."/>
            <person name="Goffeau A."/>
            <person name="Grivell L.A."/>
            <person name="Hennemann A."/>
            <person name="Herbert C.J."/>
            <person name="Heumann K."/>
            <person name="Hilger F."/>
            <person name="Hollenberg C.P."/>
            <person name="Huang M.-E."/>
            <person name="Jacq C."/>
            <person name="Jauniaux J.-C."/>
            <person name="Katsoulou C."/>
            <person name="Kirchrath L."/>
            <person name="Kleine K."/>
            <person name="Kordes E."/>
            <person name="Koetter P."/>
            <person name="Liebl S."/>
            <person name="Louis E.J."/>
            <person name="Manus V."/>
            <person name="Mewes H.-W."/>
            <person name="Miosga T."/>
            <person name="Obermaier B."/>
            <person name="Perea J."/>
            <person name="Pohl T.M."/>
            <person name="Portetelle D."/>
            <person name="Pujol A."/>
            <person name="Purnelle B."/>
            <person name="Ramezani Rad M."/>
            <person name="Rasmussen S.W."/>
            <person name="Rose M."/>
            <person name="Rossau R."/>
            <person name="Schaaff-Gerstenschlaeger I."/>
            <person name="Smits P.H.M."/>
            <person name="Scarcez T."/>
            <person name="Soriano N."/>
            <person name="To Van D."/>
            <person name="Tzermia M."/>
            <person name="Van Broekhoven A."/>
            <person name="Vandenbol M."/>
            <person name="Wedler H."/>
            <person name="von Wettstein D."/>
            <person name="Wambutt R."/>
            <person name="Zagulski M."/>
            <person name="Zollner A."/>
            <person name="Karpfinger-Hartl L."/>
        </authorList>
    </citation>
    <scope>NUCLEOTIDE SEQUENCE [LARGE SCALE GENOMIC DNA]</scope>
    <source>
        <strain>ATCC 204508 / S288c</strain>
    </source>
</reference>
<reference key="3">
    <citation type="journal article" date="2014" name="G3 (Bethesda)">
        <title>The reference genome sequence of Saccharomyces cerevisiae: Then and now.</title>
        <authorList>
            <person name="Engel S.R."/>
            <person name="Dietrich F.S."/>
            <person name="Fisk D.G."/>
            <person name="Binkley G."/>
            <person name="Balakrishnan R."/>
            <person name="Costanzo M.C."/>
            <person name="Dwight S.S."/>
            <person name="Hitz B.C."/>
            <person name="Karra K."/>
            <person name="Nash R.S."/>
            <person name="Weng S."/>
            <person name="Wong E.D."/>
            <person name="Lloyd P."/>
            <person name="Skrzypek M.S."/>
            <person name="Miyasato S.R."/>
            <person name="Simison M."/>
            <person name="Cherry J.M."/>
        </authorList>
    </citation>
    <scope>GENOME REANNOTATION</scope>
    <source>
        <strain>ATCC 204508 / S288c</strain>
    </source>
</reference>
<reference key="4">
    <citation type="journal article" date="2001" name="Biosci. Biotechnol. Biochem.">
        <title>A novel protein, Mpm1, of the mitochondria of the yeast Saccharomyces cerevisiae.</title>
        <authorList>
            <person name="Inadome H."/>
            <person name="Noda Y."/>
            <person name="Adachi H."/>
            <person name="Yoda K."/>
        </authorList>
    </citation>
    <scope>SUBCELLULAR LOCATION</scope>
</reference>
<reference key="5">
    <citation type="journal article" date="2003" name="Nature">
        <title>Global analysis of protein localization in budding yeast.</title>
        <authorList>
            <person name="Huh W.-K."/>
            <person name="Falvo J.V."/>
            <person name="Gerke L.C."/>
            <person name="Carroll A.S."/>
            <person name="Howson R.W."/>
            <person name="Weissman J.S."/>
            <person name="O'Shea E.K."/>
        </authorList>
    </citation>
    <scope>SUBCELLULAR LOCATION [LARGE SCALE ANALYSIS]</scope>
</reference>
<reference key="6">
    <citation type="journal article" date="2003" name="Nature">
        <title>Global analysis of protein expression in yeast.</title>
        <authorList>
            <person name="Ghaemmaghami S."/>
            <person name="Huh W.-K."/>
            <person name="Bower K."/>
            <person name="Howson R.W."/>
            <person name="Belle A."/>
            <person name="Dephoure N."/>
            <person name="O'Shea E.K."/>
            <person name="Weissman J.S."/>
        </authorList>
    </citation>
    <scope>LEVEL OF PROTEIN EXPRESSION [LARGE SCALE ANALYSIS]</scope>
</reference>
<reference key="7">
    <citation type="journal article" date="2003" name="Proc. Natl. Acad. Sci. U.S.A.">
        <title>The proteome of Saccharomyces cerevisiae mitochondria.</title>
        <authorList>
            <person name="Sickmann A."/>
            <person name="Reinders J."/>
            <person name="Wagner Y."/>
            <person name="Joppich C."/>
            <person name="Zahedi R.P."/>
            <person name="Meyer H.E."/>
            <person name="Schoenfisch B."/>
            <person name="Perschil I."/>
            <person name="Chacinska A."/>
            <person name="Guiard B."/>
            <person name="Rehling P."/>
            <person name="Pfanner N."/>
            <person name="Meisinger C."/>
        </authorList>
    </citation>
    <scope>SUBCELLULAR LOCATION [LARGE SCALE ANALYSIS]</scope>
    <source>
        <strain>ATCC 76625 / YPH499</strain>
    </source>
</reference>
<reference key="8">
    <citation type="journal article" date="2012" name="Mol. Cell. Proteomics">
        <title>Intermembrane space proteome of yeast mitochondria.</title>
        <authorList>
            <person name="Voegtle F.N."/>
            <person name="Burkhart J.M."/>
            <person name="Rao S."/>
            <person name="Gerbeth C."/>
            <person name="Hinrichs J."/>
            <person name="Martinou J.C."/>
            <person name="Chacinska A."/>
            <person name="Sickmann A."/>
            <person name="Zahedi R.P."/>
            <person name="Meisinger C."/>
        </authorList>
    </citation>
    <scope>IDENTIFICATION BY MASS SPECTROMETRY</scope>
    <scope>SUBCELLULAR LOCATION [LARGE SCALE ANALYSIS]</scope>
</reference>
<gene>
    <name type="primary">MPM1</name>
    <name type="ordered locus">YJL066C</name>
    <name type="ORF">HRE252</name>
    <name type="ORF">J1111</name>
</gene>